<proteinExistence type="inferred from homology"/>
<evidence type="ECO:0000250" key="1">
    <source>
        <dbReference type="UniProtKB" id="P00410"/>
    </source>
</evidence>
<evidence type="ECO:0000255" key="2"/>
<evidence type="ECO:0000305" key="3"/>
<accession>P29870</accession>
<geneLocation type="mitochondrion"/>
<protein>
    <recommendedName>
        <fullName>Cytochrome c oxidase subunit 2</fullName>
        <ecNumber>7.1.1.9</ecNumber>
    </recommendedName>
    <alternativeName>
        <fullName>Cytochrome c oxidase polypeptide II</fullName>
    </alternativeName>
</protein>
<comment type="function">
    <text evidence="1">Component of the cytochrome c oxidase, the last enzyme in the mitochondrial electron transport chain which drives oxidative phosphorylation. The respiratory chain contains 3 multisubunit complexes succinate dehydrogenase (complex II, CII), ubiquinol-cytochrome c oxidoreductase (cytochrome b-c1 complex, complex III, CIII) and cytochrome c oxidase (complex IV, CIV), that cooperate to transfer electrons derived from NADH and succinate to molecular oxygen, creating an electrochemical gradient over the inner membrane that drives transmembrane transport and the ATP synthase. Cytochrome c oxidase is the component of the respiratory chain that catalyzes the reduction of oxygen to water. Electrons originating from reduced cytochrome c in the intermembrane space (IMS) are transferred via the dinuclear copper A center (CU(A)) of subunit 2 and heme A of subunit 1 to the active site in subunit 1, a binuclear center (BNC) formed by heme A3 and copper B (CU(B)). The BNC reduces molecular oxygen to 2 water molecules using 4 electrons from cytochrome c in the IMS and 4 protons from the mitochondrial matrix.</text>
</comment>
<comment type="catalytic activity">
    <reaction evidence="1">
        <text>4 Fe(II)-[cytochrome c] + O2 + 8 H(+)(in) = 4 Fe(III)-[cytochrome c] + 2 H2O + 4 H(+)(out)</text>
        <dbReference type="Rhea" id="RHEA:11436"/>
        <dbReference type="Rhea" id="RHEA-COMP:10350"/>
        <dbReference type="Rhea" id="RHEA-COMP:14399"/>
        <dbReference type="ChEBI" id="CHEBI:15377"/>
        <dbReference type="ChEBI" id="CHEBI:15378"/>
        <dbReference type="ChEBI" id="CHEBI:15379"/>
        <dbReference type="ChEBI" id="CHEBI:29033"/>
        <dbReference type="ChEBI" id="CHEBI:29034"/>
        <dbReference type="EC" id="7.1.1.9"/>
    </reaction>
    <physiologicalReaction direction="left-to-right" evidence="1">
        <dbReference type="Rhea" id="RHEA:11437"/>
    </physiologicalReaction>
</comment>
<comment type="cofactor">
    <cofactor evidence="1">
        <name>Cu cation</name>
        <dbReference type="ChEBI" id="CHEBI:23378"/>
    </cofactor>
    <text evidence="1">Binds a dinuclear copper A center per subunit.</text>
</comment>
<comment type="subunit">
    <text evidence="1">Component of the cytochrome c oxidase (complex IV, CIV), a multisubunit enzyme composed of a catalytic core of 3 subunits and several supernumerary subunits. The complex exists as a monomer or a dimer and forms supercomplexes (SCs) in the inner mitochondrial membrane with ubiquinol-cytochrome c oxidoreductase (cytochrome b-c1 complex, complex III, CIII).</text>
</comment>
<comment type="subcellular location">
    <subcellularLocation>
        <location evidence="1">Mitochondrion inner membrane</location>
        <topology evidence="1">Multi-pass membrane protein</topology>
    </subcellularLocation>
</comment>
<comment type="similarity">
    <text evidence="3">Belongs to the cytochrome c oxidase subunit 2 family.</text>
</comment>
<organism>
    <name type="scientific">Acheta domesticus</name>
    <name type="common">House cricket</name>
    <dbReference type="NCBI Taxonomy" id="6997"/>
    <lineage>
        <taxon>Eukaryota</taxon>
        <taxon>Metazoa</taxon>
        <taxon>Ecdysozoa</taxon>
        <taxon>Arthropoda</taxon>
        <taxon>Hexapoda</taxon>
        <taxon>Insecta</taxon>
        <taxon>Pterygota</taxon>
        <taxon>Neoptera</taxon>
        <taxon>Polyneoptera</taxon>
        <taxon>Orthoptera</taxon>
        <taxon>Ensifera</taxon>
        <taxon>Gryllidea</taxon>
        <taxon>Grylloidea</taxon>
        <taxon>Gryllidae</taxon>
        <taxon>Gryllinae</taxon>
        <taxon>Acheta</taxon>
    </lineage>
</organism>
<sequence>MATWSNLNLQNSSSPLMEQLIFFHDHTLMILLMITVLVAYIMSMLFFNLYTNRFLLEGQTIEIIWTILPAITLIFIALPSLRLLYLLDESMDPLITMKTIGHQWYWSYEYMDFKNIIEFDSYMSALDKLSSFRLLDVDNRTILPMNTQIRTLVTAADVIHSWTVSALGVKTDATPGRLNQINFMINRPGLFYGQCSEICGANHSFMPIVIESVNLKNFINWIKNYSS</sequence>
<keyword id="KW-0186">Copper</keyword>
<keyword id="KW-0249">Electron transport</keyword>
<keyword id="KW-0460">Magnesium</keyword>
<keyword id="KW-0472">Membrane</keyword>
<keyword id="KW-0479">Metal-binding</keyword>
<keyword id="KW-0496">Mitochondrion</keyword>
<keyword id="KW-0999">Mitochondrion inner membrane</keyword>
<keyword id="KW-0679">Respiratory chain</keyword>
<keyword id="KW-1278">Translocase</keyword>
<keyword id="KW-0812">Transmembrane</keyword>
<keyword id="KW-1133">Transmembrane helix</keyword>
<keyword id="KW-0813">Transport</keyword>
<gene>
    <name type="primary">COII</name>
</gene>
<reference key="1">
    <citation type="journal article" date="1992" name="Mol. Phylogenet. Evol.">
        <title>Evolution of the mitochondrial cytochrome oxidase II gene among 10 orders of insects.</title>
        <authorList>
            <person name="Liu H."/>
            <person name="Beckenbach A.T."/>
        </authorList>
    </citation>
    <scope>NUCLEOTIDE SEQUENCE [GENOMIC DNA]</scope>
</reference>
<dbReference type="EC" id="7.1.1.9"/>
<dbReference type="EMBL" id="M83961">
    <property type="protein sequence ID" value="AAA31617.1"/>
    <property type="molecule type" value="Genomic_DNA"/>
</dbReference>
<dbReference type="PIR" id="I45170">
    <property type="entry name" value="I45170"/>
</dbReference>
<dbReference type="SMR" id="P29870"/>
<dbReference type="GO" id="GO:0005743">
    <property type="term" value="C:mitochondrial inner membrane"/>
    <property type="evidence" value="ECO:0007669"/>
    <property type="project" value="UniProtKB-SubCell"/>
</dbReference>
<dbReference type="GO" id="GO:0005507">
    <property type="term" value="F:copper ion binding"/>
    <property type="evidence" value="ECO:0007669"/>
    <property type="project" value="InterPro"/>
</dbReference>
<dbReference type="GO" id="GO:0004129">
    <property type="term" value="F:cytochrome-c oxidase activity"/>
    <property type="evidence" value="ECO:0007669"/>
    <property type="project" value="UniProtKB-EC"/>
</dbReference>
<dbReference type="GO" id="GO:0042773">
    <property type="term" value="P:ATP synthesis coupled electron transport"/>
    <property type="evidence" value="ECO:0007669"/>
    <property type="project" value="TreeGrafter"/>
</dbReference>
<dbReference type="CDD" id="cd13912">
    <property type="entry name" value="CcO_II_C"/>
    <property type="match status" value="1"/>
</dbReference>
<dbReference type="FunFam" id="1.10.287.90:FF:000001">
    <property type="entry name" value="Cytochrome c oxidase subunit 2"/>
    <property type="match status" value="1"/>
</dbReference>
<dbReference type="FunFam" id="2.60.40.420:FF:000001">
    <property type="entry name" value="Cytochrome c oxidase subunit 2"/>
    <property type="match status" value="1"/>
</dbReference>
<dbReference type="Gene3D" id="1.10.287.90">
    <property type="match status" value="1"/>
</dbReference>
<dbReference type="Gene3D" id="2.60.40.420">
    <property type="entry name" value="Cupredoxins - blue copper proteins"/>
    <property type="match status" value="1"/>
</dbReference>
<dbReference type="InterPro" id="IPR045187">
    <property type="entry name" value="CcO_II"/>
</dbReference>
<dbReference type="InterPro" id="IPR002429">
    <property type="entry name" value="CcO_II-like_C"/>
</dbReference>
<dbReference type="InterPro" id="IPR034210">
    <property type="entry name" value="CcO_II_C"/>
</dbReference>
<dbReference type="InterPro" id="IPR001505">
    <property type="entry name" value="Copper_CuA"/>
</dbReference>
<dbReference type="InterPro" id="IPR008972">
    <property type="entry name" value="Cupredoxin"/>
</dbReference>
<dbReference type="InterPro" id="IPR011759">
    <property type="entry name" value="Cyt_c_oxidase_su2_TM_dom"/>
</dbReference>
<dbReference type="InterPro" id="IPR036257">
    <property type="entry name" value="Cyt_c_oxidase_su2_TM_sf"/>
</dbReference>
<dbReference type="PANTHER" id="PTHR22888:SF9">
    <property type="entry name" value="CYTOCHROME C OXIDASE SUBUNIT 2"/>
    <property type="match status" value="1"/>
</dbReference>
<dbReference type="PANTHER" id="PTHR22888">
    <property type="entry name" value="CYTOCHROME C OXIDASE, SUBUNIT II"/>
    <property type="match status" value="1"/>
</dbReference>
<dbReference type="Pfam" id="PF00116">
    <property type="entry name" value="COX2"/>
    <property type="match status" value="1"/>
</dbReference>
<dbReference type="Pfam" id="PF02790">
    <property type="entry name" value="COX2_TM"/>
    <property type="match status" value="1"/>
</dbReference>
<dbReference type="PRINTS" id="PR01166">
    <property type="entry name" value="CYCOXIDASEII"/>
</dbReference>
<dbReference type="SUPFAM" id="SSF49503">
    <property type="entry name" value="Cupredoxins"/>
    <property type="match status" value="1"/>
</dbReference>
<dbReference type="SUPFAM" id="SSF81464">
    <property type="entry name" value="Cytochrome c oxidase subunit II-like, transmembrane region"/>
    <property type="match status" value="1"/>
</dbReference>
<dbReference type="PROSITE" id="PS00078">
    <property type="entry name" value="COX2"/>
    <property type="match status" value="1"/>
</dbReference>
<dbReference type="PROSITE" id="PS50857">
    <property type="entry name" value="COX2_CUA"/>
    <property type="match status" value="1"/>
</dbReference>
<dbReference type="PROSITE" id="PS50999">
    <property type="entry name" value="COX2_TM"/>
    <property type="match status" value="1"/>
</dbReference>
<feature type="chain" id="PRO_0000183483" description="Cytochrome c oxidase subunit 2">
    <location>
        <begin position="1"/>
        <end position="227"/>
    </location>
</feature>
<feature type="topological domain" description="Mitochondrial intermembrane" evidence="2">
    <location>
        <begin position="1"/>
        <end position="26"/>
    </location>
</feature>
<feature type="transmembrane region" description="Helical" evidence="2">
    <location>
        <begin position="27"/>
        <end position="48"/>
    </location>
</feature>
<feature type="topological domain" description="Mitochondrial matrix" evidence="2">
    <location>
        <begin position="49"/>
        <end position="62"/>
    </location>
</feature>
<feature type="transmembrane region" description="Helical" evidence="2">
    <location>
        <begin position="63"/>
        <end position="82"/>
    </location>
</feature>
<feature type="topological domain" description="Mitochondrial intermembrane" evidence="2">
    <location>
        <begin position="83"/>
        <end position="227"/>
    </location>
</feature>
<feature type="binding site" evidence="1">
    <location>
        <position position="160"/>
    </location>
    <ligand>
        <name>Cu cation</name>
        <dbReference type="ChEBI" id="CHEBI:23378"/>
        <label>A1</label>
    </ligand>
</feature>
<feature type="binding site" evidence="1">
    <location>
        <position position="195"/>
    </location>
    <ligand>
        <name>Cu cation</name>
        <dbReference type="ChEBI" id="CHEBI:23378"/>
        <label>A1</label>
    </ligand>
</feature>
<feature type="binding site" evidence="1">
    <location>
        <position position="195"/>
    </location>
    <ligand>
        <name>Cu cation</name>
        <dbReference type="ChEBI" id="CHEBI:23378"/>
        <label>A2</label>
    </ligand>
</feature>
<feature type="binding site" evidence="1">
    <location>
        <position position="197"/>
    </location>
    <ligand>
        <name>Cu cation</name>
        <dbReference type="ChEBI" id="CHEBI:23378"/>
        <label>A2</label>
    </ligand>
</feature>
<feature type="binding site" evidence="1">
    <location>
        <position position="197"/>
    </location>
    <ligand>
        <name>Mg(2+)</name>
        <dbReference type="ChEBI" id="CHEBI:18420"/>
        <note>ligand shared with subunit 1</note>
    </ligand>
</feature>
<feature type="binding site" evidence="1">
    <location>
        <position position="199"/>
    </location>
    <ligand>
        <name>Cu cation</name>
        <dbReference type="ChEBI" id="CHEBI:23378"/>
        <label>A1</label>
    </ligand>
</feature>
<feature type="binding site" evidence="1">
    <location>
        <position position="199"/>
    </location>
    <ligand>
        <name>Cu cation</name>
        <dbReference type="ChEBI" id="CHEBI:23378"/>
        <label>A2</label>
    </ligand>
</feature>
<feature type="binding site" evidence="1">
    <location>
        <position position="203"/>
    </location>
    <ligand>
        <name>Cu cation</name>
        <dbReference type="ChEBI" id="CHEBI:23378"/>
        <label>A2</label>
    </ligand>
</feature>
<feature type="binding site" evidence="1">
    <location>
        <position position="206"/>
    </location>
    <ligand>
        <name>Cu cation</name>
        <dbReference type="ChEBI" id="CHEBI:23378"/>
        <label>A1</label>
    </ligand>
</feature>
<name>COX2_ACHDO</name>